<evidence type="ECO:0000255" key="1">
    <source>
        <dbReference type="HAMAP-Rule" id="MF_00412"/>
    </source>
</evidence>
<keyword id="KW-0028">Amino-acid biosynthesis</keyword>
<keyword id="KW-0963">Cytoplasm</keyword>
<keyword id="KW-0521">NADP</keyword>
<keyword id="KW-0560">Oxidoreductase</keyword>
<keyword id="KW-0641">Proline biosynthesis</keyword>
<gene>
    <name evidence="1" type="primary">proA</name>
</gene>
<comment type="function">
    <text evidence="1">Catalyzes the NADPH-dependent reduction of L-glutamate 5-phosphate into L-glutamate 5-semialdehyde and phosphate. The product spontaneously undergoes cyclization to form 1-pyrroline-5-carboxylate.</text>
</comment>
<comment type="catalytic activity">
    <reaction evidence="1">
        <text>L-glutamate 5-semialdehyde + phosphate + NADP(+) = L-glutamyl 5-phosphate + NADPH + H(+)</text>
        <dbReference type="Rhea" id="RHEA:19541"/>
        <dbReference type="ChEBI" id="CHEBI:15378"/>
        <dbReference type="ChEBI" id="CHEBI:43474"/>
        <dbReference type="ChEBI" id="CHEBI:57783"/>
        <dbReference type="ChEBI" id="CHEBI:58066"/>
        <dbReference type="ChEBI" id="CHEBI:58274"/>
        <dbReference type="ChEBI" id="CHEBI:58349"/>
        <dbReference type="EC" id="1.2.1.41"/>
    </reaction>
</comment>
<comment type="pathway">
    <text evidence="1">Amino-acid biosynthesis; L-proline biosynthesis; L-glutamate 5-semialdehyde from L-glutamate: step 2/2.</text>
</comment>
<comment type="subcellular location">
    <subcellularLocation>
        <location evidence="1">Cytoplasm</location>
    </subcellularLocation>
</comment>
<comment type="similarity">
    <text evidence="1">Belongs to the gamma-glutamyl phosphate reductase family.</text>
</comment>
<organism>
    <name type="scientific">Corynebacterium melassecola</name>
    <dbReference type="NCBI Taxonomy" id="41643"/>
    <lineage>
        <taxon>Bacteria</taxon>
        <taxon>Bacillati</taxon>
        <taxon>Actinomycetota</taxon>
        <taxon>Actinomycetes</taxon>
        <taxon>Mycobacteriales</taxon>
        <taxon>Corynebacteriaceae</taxon>
        <taxon>Corynebacterium</taxon>
    </lineage>
</organism>
<feature type="chain" id="PRO_0000236036" description="Gamma-glutamyl phosphate reductase">
    <location>
        <begin position="1"/>
        <end position="432"/>
    </location>
</feature>
<sequence>MSSTTLTDDQIRDNERTEVLAKATAAKNIVPDIAVLGTGPKNAILRAAADELVARSAEIIEANASDIEAGRANGMEESMIDRLALDESRIEGIAGGLRQVAGLTDPVGEVLRGHVMENGIQMKQVRVPLGVMGMVYEARPNVTVDAFALALKSGNVAFVRGSSTAVHSNTKLVEILQDVLERFELPRETVQLLPCQTRGSVQDLITARGLVDVVIPRGGAGLINAVVTGATVPTIETGTGNCHFYIDAEAKLGQAIAMVINGKTRRCSVCNATETALLDAALSDSDKLAVVQALQEAGVTIHGRVAELEAFGATDVVEATETDWDSEYLSFDIAVAVVDGVDGALAHIAKYSTKHTEAIATQNIETAQRFADRVDAAAVMINASTAYTDGEQYGMGAEIGISTQKLHARGPMALPELTSTKWILQGTGQIRP</sequence>
<name>PROA_CORML</name>
<accession>P0C1E1</accession>
<accession>P45638</accession>
<protein>
    <recommendedName>
        <fullName evidence="1">Gamma-glutamyl phosphate reductase</fullName>
        <shortName evidence="1">GPR</shortName>
        <ecNumber evidence="1">1.2.1.41</ecNumber>
    </recommendedName>
    <alternativeName>
        <fullName evidence="1">Glutamate-5-semialdehyde dehydrogenase</fullName>
    </alternativeName>
    <alternativeName>
        <fullName evidence="1">Glutamyl-gamma-semialdehyde dehydrogenase</fullName>
        <shortName evidence="1">GSA dehydrogenase</shortName>
    </alternativeName>
</protein>
<reference key="1">
    <citation type="journal article" date="1995" name="J. Bacteriol.">
        <title>Multicopy suppression by asd gene and osmotic stress-dependent complementation by heterologous proA in proA mutants.</title>
        <authorList>
            <person name="Serebrijski I."/>
            <person name="Wojcik F."/>
            <person name="Reyes O."/>
            <person name="Leblon G."/>
        </authorList>
    </citation>
    <scope>NUCLEOTIDE SEQUENCE [GENOMIC DNA]</scope>
    <source>
        <strain>ATCC 17965 / AS B-4821</strain>
    </source>
</reference>
<proteinExistence type="inferred from homology"/>
<dbReference type="EC" id="1.2.1.41" evidence="1"/>
<dbReference type="EMBL" id="X82929">
    <property type="protein sequence ID" value="CAA58103.1"/>
    <property type="molecule type" value="Genomic_DNA"/>
</dbReference>
<dbReference type="PIR" id="S49980">
    <property type="entry name" value="S49980"/>
</dbReference>
<dbReference type="SMR" id="P0C1E1"/>
<dbReference type="UniPathway" id="UPA00098">
    <property type="reaction ID" value="UER00360"/>
</dbReference>
<dbReference type="GO" id="GO:0005737">
    <property type="term" value="C:cytoplasm"/>
    <property type="evidence" value="ECO:0007669"/>
    <property type="project" value="UniProtKB-SubCell"/>
</dbReference>
<dbReference type="GO" id="GO:0004350">
    <property type="term" value="F:glutamate-5-semialdehyde dehydrogenase activity"/>
    <property type="evidence" value="ECO:0007669"/>
    <property type="project" value="UniProtKB-UniRule"/>
</dbReference>
<dbReference type="GO" id="GO:0050661">
    <property type="term" value="F:NADP binding"/>
    <property type="evidence" value="ECO:0007669"/>
    <property type="project" value="InterPro"/>
</dbReference>
<dbReference type="GO" id="GO:0055129">
    <property type="term" value="P:L-proline biosynthetic process"/>
    <property type="evidence" value="ECO:0007669"/>
    <property type="project" value="UniProtKB-UniRule"/>
</dbReference>
<dbReference type="CDD" id="cd07079">
    <property type="entry name" value="ALDH_F18-19_ProA-GPR"/>
    <property type="match status" value="1"/>
</dbReference>
<dbReference type="Gene3D" id="3.40.605.10">
    <property type="entry name" value="Aldehyde Dehydrogenase, Chain A, domain 1"/>
    <property type="match status" value="1"/>
</dbReference>
<dbReference type="Gene3D" id="3.40.309.10">
    <property type="entry name" value="Aldehyde Dehydrogenase, Chain A, domain 2"/>
    <property type="match status" value="1"/>
</dbReference>
<dbReference type="HAMAP" id="MF_00412">
    <property type="entry name" value="ProA"/>
    <property type="match status" value="1"/>
</dbReference>
<dbReference type="InterPro" id="IPR016161">
    <property type="entry name" value="Ald_DH/histidinol_DH"/>
</dbReference>
<dbReference type="InterPro" id="IPR016163">
    <property type="entry name" value="Ald_DH_C"/>
</dbReference>
<dbReference type="InterPro" id="IPR016162">
    <property type="entry name" value="Ald_DH_N"/>
</dbReference>
<dbReference type="InterPro" id="IPR015590">
    <property type="entry name" value="Aldehyde_DH_dom"/>
</dbReference>
<dbReference type="InterPro" id="IPR020593">
    <property type="entry name" value="G-glutamylP_reductase_CS"/>
</dbReference>
<dbReference type="InterPro" id="IPR012134">
    <property type="entry name" value="Glu-5-SA_DH"/>
</dbReference>
<dbReference type="InterPro" id="IPR000965">
    <property type="entry name" value="GPR_dom"/>
</dbReference>
<dbReference type="NCBIfam" id="NF001221">
    <property type="entry name" value="PRK00197.1"/>
    <property type="match status" value="1"/>
</dbReference>
<dbReference type="NCBIfam" id="TIGR00407">
    <property type="entry name" value="proA"/>
    <property type="match status" value="1"/>
</dbReference>
<dbReference type="PANTHER" id="PTHR11063:SF8">
    <property type="entry name" value="DELTA-1-PYRROLINE-5-CARBOXYLATE SYNTHASE"/>
    <property type="match status" value="1"/>
</dbReference>
<dbReference type="PANTHER" id="PTHR11063">
    <property type="entry name" value="GLUTAMATE SEMIALDEHYDE DEHYDROGENASE"/>
    <property type="match status" value="1"/>
</dbReference>
<dbReference type="Pfam" id="PF00171">
    <property type="entry name" value="Aldedh"/>
    <property type="match status" value="1"/>
</dbReference>
<dbReference type="PIRSF" id="PIRSF000151">
    <property type="entry name" value="GPR"/>
    <property type="match status" value="1"/>
</dbReference>
<dbReference type="SUPFAM" id="SSF53720">
    <property type="entry name" value="ALDH-like"/>
    <property type="match status" value="1"/>
</dbReference>
<dbReference type="PROSITE" id="PS01223">
    <property type="entry name" value="PROA"/>
    <property type="match status" value="1"/>
</dbReference>